<reference key="1">
    <citation type="journal article" date="1996" name="Science">
        <title>Complete genome sequence of the methanogenic archaeon, Methanococcus jannaschii.</title>
        <authorList>
            <person name="Bult C.J."/>
            <person name="White O."/>
            <person name="Olsen G.J."/>
            <person name="Zhou L."/>
            <person name="Fleischmann R.D."/>
            <person name="Sutton G.G."/>
            <person name="Blake J.A."/>
            <person name="FitzGerald L.M."/>
            <person name="Clayton R.A."/>
            <person name="Gocayne J.D."/>
            <person name="Kerlavage A.R."/>
            <person name="Dougherty B.A."/>
            <person name="Tomb J.-F."/>
            <person name="Adams M.D."/>
            <person name="Reich C.I."/>
            <person name="Overbeek R."/>
            <person name="Kirkness E.F."/>
            <person name="Weinstock K.G."/>
            <person name="Merrick J.M."/>
            <person name="Glodek A."/>
            <person name="Scott J.L."/>
            <person name="Geoghagen N.S.M."/>
            <person name="Weidman J.F."/>
            <person name="Fuhrmann J.L."/>
            <person name="Nguyen D."/>
            <person name="Utterback T.R."/>
            <person name="Kelley J.M."/>
            <person name="Peterson J.D."/>
            <person name="Sadow P.W."/>
            <person name="Hanna M.C."/>
            <person name="Cotton M.D."/>
            <person name="Roberts K.M."/>
            <person name="Hurst M.A."/>
            <person name="Kaine B.P."/>
            <person name="Borodovsky M."/>
            <person name="Klenk H.-P."/>
            <person name="Fraser C.M."/>
            <person name="Smith H.O."/>
            <person name="Woese C.R."/>
            <person name="Venter J.C."/>
        </authorList>
    </citation>
    <scope>NUCLEOTIDE SEQUENCE [LARGE SCALE GENOMIC DNA]</scope>
    <source>
        <strain>ATCC 43067 / DSM 2661 / JAL-1 / JCM 10045 / NBRC 100440</strain>
    </source>
</reference>
<organism>
    <name type="scientific">Methanocaldococcus jannaschii (strain ATCC 43067 / DSM 2661 / JAL-1 / JCM 10045 / NBRC 100440)</name>
    <name type="common">Methanococcus jannaschii</name>
    <dbReference type="NCBI Taxonomy" id="243232"/>
    <lineage>
        <taxon>Archaea</taxon>
        <taxon>Methanobacteriati</taxon>
        <taxon>Methanobacteriota</taxon>
        <taxon>Methanomada group</taxon>
        <taxon>Methanococci</taxon>
        <taxon>Methanococcales</taxon>
        <taxon>Methanocaldococcaceae</taxon>
        <taxon>Methanocaldococcus</taxon>
    </lineage>
</organism>
<accession>Q58692</accession>
<proteinExistence type="inferred from homology"/>
<sequence length="358" mass="40722">MIFMEIETFLKKSLKNKIDFDDALYLYNNFSAIDLLYLAFKIKNRIKNNSKIKLCAIINAKSGKCKEDCIFCSQSIYSKCNIPIYPLKSKKEILEYAKKIIDECSKISSSIERGTLIGAESPNLMDVGYPNRGFPLWVERFSIVTSGKKINDDEFIEIVEAIELIKEETNLKVCCSLGLLDREKLKELKKLDVRIHNNLEASKNYFKNICSTHSYEDKVKVIKEAKKLDLEVCSGGIFGLGESVEERIKMAFELKELGVDSVPINILHPIEGTKAYEKIKNGEIKPISVSDALKLIALYKIIMPYAEIRLAGGRIYNLRDFQSYALMVLDGLMVGNYLTTKGRCLEDDLKMIADFHSL</sequence>
<comment type="function">
    <text evidence="1">Catalyzes the conversion of dethiobiotin (DTB) to biotin by the insertion of a sulfur atom into dethiobiotin via a radical-based mechanism.</text>
</comment>
<comment type="catalytic activity">
    <reaction evidence="1">
        <text>(4R,5S)-dethiobiotin + (sulfur carrier)-SH + 2 reduced [2Fe-2S]-[ferredoxin] + 2 S-adenosyl-L-methionine = (sulfur carrier)-H + biotin + 2 5'-deoxyadenosine + 2 L-methionine + 2 oxidized [2Fe-2S]-[ferredoxin]</text>
        <dbReference type="Rhea" id="RHEA:22060"/>
        <dbReference type="Rhea" id="RHEA-COMP:10000"/>
        <dbReference type="Rhea" id="RHEA-COMP:10001"/>
        <dbReference type="Rhea" id="RHEA-COMP:14737"/>
        <dbReference type="Rhea" id="RHEA-COMP:14739"/>
        <dbReference type="ChEBI" id="CHEBI:17319"/>
        <dbReference type="ChEBI" id="CHEBI:29917"/>
        <dbReference type="ChEBI" id="CHEBI:33737"/>
        <dbReference type="ChEBI" id="CHEBI:33738"/>
        <dbReference type="ChEBI" id="CHEBI:57586"/>
        <dbReference type="ChEBI" id="CHEBI:57844"/>
        <dbReference type="ChEBI" id="CHEBI:59789"/>
        <dbReference type="ChEBI" id="CHEBI:64428"/>
        <dbReference type="ChEBI" id="CHEBI:149473"/>
        <dbReference type="EC" id="2.8.1.6"/>
    </reaction>
</comment>
<comment type="cofactor">
    <cofactor evidence="1">
        <name>[4Fe-4S] cluster</name>
        <dbReference type="ChEBI" id="CHEBI:49883"/>
    </cofactor>
    <text evidence="1">Binds 1 [4Fe-4S] cluster. The cluster is coordinated with 3 cysteines and an exchangeable S-adenosyl-L-methionine.</text>
</comment>
<comment type="cofactor">
    <cofactor evidence="1">
        <name>[2Fe-2S] cluster</name>
        <dbReference type="ChEBI" id="CHEBI:190135"/>
    </cofactor>
    <text evidence="1">Binds 1 [2Fe-2S] cluster. The cluster is coordinated with 3 cysteines and 1 arginine.</text>
</comment>
<comment type="pathway">
    <text evidence="1">Cofactor biosynthesis; biotin biosynthesis; biotin from 7,8-diaminononanoate: step 2/2.</text>
</comment>
<comment type="subunit">
    <text evidence="1">Homodimer.</text>
</comment>
<comment type="similarity">
    <text evidence="1">Belongs to the radical SAM superfamily. Biotin synthase family.</text>
</comment>
<name>BIOB_METJA</name>
<evidence type="ECO:0000255" key="1">
    <source>
        <dbReference type="HAMAP-Rule" id="MF_01694"/>
    </source>
</evidence>
<evidence type="ECO:0000255" key="2">
    <source>
        <dbReference type="PROSITE-ProRule" id="PRU01266"/>
    </source>
</evidence>
<dbReference type="EC" id="2.8.1.6" evidence="1"/>
<dbReference type="EMBL" id="L77117">
    <property type="protein sequence ID" value="AAB99303.1"/>
    <property type="molecule type" value="Genomic_DNA"/>
</dbReference>
<dbReference type="PIR" id="G64461">
    <property type="entry name" value="G64461"/>
</dbReference>
<dbReference type="SMR" id="Q58692"/>
<dbReference type="FunCoup" id="Q58692">
    <property type="interactions" value="179"/>
</dbReference>
<dbReference type="STRING" id="243232.MJ_1296"/>
<dbReference type="PaxDb" id="243232-MJ_1296"/>
<dbReference type="EnsemblBacteria" id="AAB99303">
    <property type="protein sequence ID" value="AAB99303"/>
    <property type="gene ID" value="MJ_1296"/>
</dbReference>
<dbReference type="KEGG" id="mja:MJ_1296"/>
<dbReference type="eggNOG" id="arCOG00658">
    <property type="taxonomic scope" value="Archaea"/>
</dbReference>
<dbReference type="HOGENOM" id="CLU_033172_2_1_2"/>
<dbReference type="InParanoid" id="Q58692"/>
<dbReference type="PhylomeDB" id="Q58692"/>
<dbReference type="UniPathway" id="UPA00078">
    <property type="reaction ID" value="UER00162"/>
</dbReference>
<dbReference type="Proteomes" id="UP000000805">
    <property type="component" value="Chromosome"/>
</dbReference>
<dbReference type="GO" id="GO:0051537">
    <property type="term" value="F:2 iron, 2 sulfur cluster binding"/>
    <property type="evidence" value="ECO:0000318"/>
    <property type="project" value="GO_Central"/>
</dbReference>
<dbReference type="GO" id="GO:0051539">
    <property type="term" value="F:4 iron, 4 sulfur cluster binding"/>
    <property type="evidence" value="ECO:0007669"/>
    <property type="project" value="UniProtKB-KW"/>
</dbReference>
<dbReference type="GO" id="GO:0004076">
    <property type="term" value="F:biotin synthase activity"/>
    <property type="evidence" value="ECO:0000318"/>
    <property type="project" value="GO_Central"/>
</dbReference>
<dbReference type="GO" id="GO:0005506">
    <property type="term" value="F:iron ion binding"/>
    <property type="evidence" value="ECO:0007669"/>
    <property type="project" value="UniProtKB-UniRule"/>
</dbReference>
<dbReference type="GO" id="GO:0009102">
    <property type="term" value="P:biotin biosynthetic process"/>
    <property type="evidence" value="ECO:0000318"/>
    <property type="project" value="GO_Central"/>
</dbReference>
<dbReference type="CDD" id="cd01335">
    <property type="entry name" value="Radical_SAM"/>
    <property type="match status" value="1"/>
</dbReference>
<dbReference type="FunFam" id="3.20.20.70:FF:000605">
    <property type="match status" value="1"/>
</dbReference>
<dbReference type="Gene3D" id="3.20.20.70">
    <property type="entry name" value="Aldolase class I"/>
    <property type="match status" value="2"/>
</dbReference>
<dbReference type="HAMAP" id="MF_01694">
    <property type="entry name" value="BioB"/>
    <property type="match status" value="1"/>
</dbReference>
<dbReference type="InterPro" id="IPR013785">
    <property type="entry name" value="Aldolase_TIM"/>
</dbReference>
<dbReference type="InterPro" id="IPR010722">
    <property type="entry name" value="BATS_dom"/>
</dbReference>
<dbReference type="InterPro" id="IPR002684">
    <property type="entry name" value="Biotin_synth/BioAB"/>
</dbReference>
<dbReference type="InterPro" id="IPR024177">
    <property type="entry name" value="Biotin_synthase"/>
</dbReference>
<dbReference type="InterPro" id="IPR006638">
    <property type="entry name" value="Elp3/MiaA/NifB-like_rSAM"/>
</dbReference>
<dbReference type="InterPro" id="IPR007197">
    <property type="entry name" value="rSAM"/>
</dbReference>
<dbReference type="NCBIfam" id="TIGR00433">
    <property type="entry name" value="bioB"/>
    <property type="match status" value="1"/>
</dbReference>
<dbReference type="PANTHER" id="PTHR22976">
    <property type="entry name" value="BIOTIN SYNTHASE"/>
    <property type="match status" value="1"/>
</dbReference>
<dbReference type="PANTHER" id="PTHR22976:SF2">
    <property type="entry name" value="BIOTIN SYNTHASE, MITOCHONDRIAL"/>
    <property type="match status" value="1"/>
</dbReference>
<dbReference type="Pfam" id="PF06968">
    <property type="entry name" value="BATS"/>
    <property type="match status" value="1"/>
</dbReference>
<dbReference type="Pfam" id="PF04055">
    <property type="entry name" value="Radical_SAM"/>
    <property type="match status" value="1"/>
</dbReference>
<dbReference type="PIRSF" id="PIRSF001619">
    <property type="entry name" value="Biotin_synth"/>
    <property type="match status" value="1"/>
</dbReference>
<dbReference type="SFLD" id="SFLDG01278">
    <property type="entry name" value="biotin_synthase_like"/>
    <property type="match status" value="1"/>
</dbReference>
<dbReference type="SFLD" id="SFLDS00029">
    <property type="entry name" value="Radical_SAM"/>
    <property type="match status" value="1"/>
</dbReference>
<dbReference type="SMART" id="SM00876">
    <property type="entry name" value="BATS"/>
    <property type="match status" value="1"/>
</dbReference>
<dbReference type="SMART" id="SM00729">
    <property type="entry name" value="Elp3"/>
    <property type="match status" value="1"/>
</dbReference>
<dbReference type="SUPFAM" id="SSF102114">
    <property type="entry name" value="Radical SAM enzymes"/>
    <property type="match status" value="1"/>
</dbReference>
<dbReference type="PROSITE" id="PS51918">
    <property type="entry name" value="RADICAL_SAM"/>
    <property type="match status" value="1"/>
</dbReference>
<feature type="chain" id="PRO_0000185564" description="Biotin synthase">
    <location>
        <begin position="1"/>
        <end position="358"/>
    </location>
</feature>
<feature type="domain" description="Radical SAM core" evidence="2">
    <location>
        <begin position="47"/>
        <end position="306"/>
    </location>
</feature>
<feature type="binding site" evidence="1">
    <location>
        <position position="65"/>
    </location>
    <ligand>
        <name>[4Fe-4S] cluster</name>
        <dbReference type="ChEBI" id="CHEBI:49883"/>
        <note>4Fe-4S-S-AdoMet</note>
    </ligand>
</feature>
<feature type="binding site" evidence="1">
    <location>
        <position position="69"/>
    </location>
    <ligand>
        <name>[4Fe-4S] cluster</name>
        <dbReference type="ChEBI" id="CHEBI:49883"/>
        <note>4Fe-4S-S-AdoMet</note>
    </ligand>
</feature>
<feature type="binding site" evidence="1">
    <location>
        <position position="72"/>
    </location>
    <ligand>
        <name>[4Fe-4S] cluster</name>
        <dbReference type="ChEBI" id="CHEBI:49883"/>
        <note>4Fe-4S-S-AdoMet</note>
    </ligand>
</feature>
<feature type="binding site" evidence="1">
    <location>
        <position position="142"/>
    </location>
    <ligand>
        <name>[2Fe-2S] cluster</name>
        <dbReference type="ChEBI" id="CHEBI:190135"/>
    </ligand>
</feature>
<feature type="binding site" evidence="1">
    <location>
        <position position="174"/>
    </location>
    <ligand>
        <name>[2Fe-2S] cluster</name>
        <dbReference type="ChEBI" id="CHEBI:190135"/>
    </ligand>
</feature>
<feature type="binding site" evidence="1">
    <location>
        <position position="233"/>
    </location>
    <ligand>
        <name>[2Fe-2S] cluster</name>
        <dbReference type="ChEBI" id="CHEBI:190135"/>
    </ligand>
</feature>
<feature type="binding site" evidence="1">
    <location>
        <position position="309"/>
    </location>
    <ligand>
        <name>[2Fe-2S] cluster</name>
        <dbReference type="ChEBI" id="CHEBI:190135"/>
    </ligand>
</feature>
<protein>
    <recommendedName>
        <fullName evidence="1">Biotin synthase</fullName>
        <ecNumber evidence="1">2.8.1.6</ecNumber>
    </recommendedName>
</protein>
<keyword id="KW-0001">2Fe-2S</keyword>
<keyword id="KW-0004">4Fe-4S</keyword>
<keyword id="KW-0093">Biotin biosynthesis</keyword>
<keyword id="KW-0408">Iron</keyword>
<keyword id="KW-0411">Iron-sulfur</keyword>
<keyword id="KW-0479">Metal-binding</keyword>
<keyword id="KW-1185">Reference proteome</keyword>
<keyword id="KW-0949">S-adenosyl-L-methionine</keyword>
<keyword id="KW-0808">Transferase</keyword>
<gene>
    <name evidence="1" type="primary">bioB</name>
    <name type="ordered locus">MJ1296</name>
</gene>